<dbReference type="EMBL" id="U45854">
    <property type="protein sequence ID" value="AAA86840.1"/>
    <property type="molecule type" value="Genomic_DNA"/>
</dbReference>
<dbReference type="SMR" id="Q46967"/>
<dbReference type="GO" id="GO:0003677">
    <property type="term" value="F:DNA binding"/>
    <property type="evidence" value="ECO:0007669"/>
    <property type="project" value="UniProtKB-KW"/>
</dbReference>
<dbReference type="GO" id="GO:0009372">
    <property type="term" value="P:quorum sensing"/>
    <property type="evidence" value="ECO:0007669"/>
    <property type="project" value="UniProtKB-KW"/>
</dbReference>
<dbReference type="GO" id="GO:0006355">
    <property type="term" value="P:regulation of DNA-templated transcription"/>
    <property type="evidence" value="ECO:0007669"/>
    <property type="project" value="InterPro"/>
</dbReference>
<dbReference type="CDD" id="cd06170">
    <property type="entry name" value="LuxR_C_like"/>
    <property type="match status" value="1"/>
</dbReference>
<dbReference type="Gene3D" id="3.30.450.80">
    <property type="entry name" value="Transcription factor LuxR-like, autoinducer-binding domain"/>
    <property type="match status" value="1"/>
</dbReference>
<dbReference type="Gene3D" id="1.10.10.10">
    <property type="entry name" value="Winged helix-like DNA-binding domain superfamily/Winged helix DNA-binding domain"/>
    <property type="match status" value="1"/>
</dbReference>
<dbReference type="InterPro" id="IPR016032">
    <property type="entry name" value="Sig_transdc_resp-reg_C-effctor"/>
</dbReference>
<dbReference type="InterPro" id="IPR005143">
    <property type="entry name" value="TF_LuxR_autoind-bd_dom"/>
</dbReference>
<dbReference type="InterPro" id="IPR036693">
    <property type="entry name" value="TF_LuxR_autoind-bd_dom_sf"/>
</dbReference>
<dbReference type="InterPro" id="IPR000792">
    <property type="entry name" value="Tscrpt_reg_LuxR_C"/>
</dbReference>
<dbReference type="InterPro" id="IPR036388">
    <property type="entry name" value="WH-like_DNA-bd_sf"/>
</dbReference>
<dbReference type="PANTHER" id="PTHR44688">
    <property type="entry name" value="DNA-BINDING TRANSCRIPTIONAL ACTIVATOR DEVR_DOSR"/>
    <property type="match status" value="1"/>
</dbReference>
<dbReference type="PANTHER" id="PTHR44688:SF16">
    <property type="entry name" value="DNA-BINDING TRANSCRIPTIONAL ACTIVATOR DEVR_DOSR"/>
    <property type="match status" value="1"/>
</dbReference>
<dbReference type="Pfam" id="PF03472">
    <property type="entry name" value="Autoind_bind"/>
    <property type="match status" value="1"/>
</dbReference>
<dbReference type="Pfam" id="PF00196">
    <property type="entry name" value="GerE"/>
    <property type="match status" value="1"/>
</dbReference>
<dbReference type="PRINTS" id="PR00038">
    <property type="entry name" value="HTHLUXR"/>
</dbReference>
<dbReference type="SMART" id="SM00421">
    <property type="entry name" value="HTH_LUXR"/>
    <property type="match status" value="1"/>
</dbReference>
<dbReference type="SUPFAM" id="SSF46894">
    <property type="entry name" value="C-terminal effector domain of the bipartite response regulators"/>
    <property type="match status" value="1"/>
</dbReference>
<dbReference type="SUPFAM" id="SSF75516">
    <property type="entry name" value="Pheromone-binding domain of LuxR-like quorum-sensing transcription factors"/>
    <property type="match status" value="1"/>
</dbReference>
<dbReference type="PROSITE" id="PS00622">
    <property type="entry name" value="HTH_LUXR_1"/>
    <property type="match status" value="1"/>
</dbReference>
<dbReference type="PROSITE" id="PS50043">
    <property type="entry name" value="HTH_LUXR_2"/>
    <property type="match status" value="1"/>
</dbReference>
<evidence type="ECO:0000255" key="1">
    <source>
        <dbReference type="PROSITE-ProRule" id="PRU00411"/>
    </source>
</evidence>
<evidence type="ECO:0000305" key="2"/>
<accession>Q46967</accession>
<gene>
    <name type="primary">echR</name>
</gene>
<reference key="1">
    <citation type="submission" date="1996-01" db="EMBL/GenBank/DDBJ databases">
        <authorList>
            <person name="Sebaihia M."/>
            <person name="Harrison O."/>
            <person name="Kell C."/>
            <person name="Minton N."/>
            <person name="Salmond G.P.C."/>
        </authorList>
    </citation>
    <scope>NUCLEOTIDE SEQUENCE [GENOMIC DNA]</scope>
    <source>
        <strain>NCPPB 1066</strain>
    </source>
</reference>
<keyword id="KW-0010">Activator</keyword>
<keyword id="KW-0238">DNA-binding</keyword>
<keyword id="KW-0673">Quorum sensing</keyword>
<keyword id="KW-0804">Transcription</keyword>
<keyword id="KW-0805">Transcription regulation</keyword>
<protein>
    <recommendedName>
        <fullName>Transcriptional activator protein EchR</fullName>
    </recommendedName>
</protein>
<proteinExistence type="inferred from homology"/>
<organism>
    <name type="scientific">Dickeya chrysanthemi</name>
    <name type="common">Pectobacterium chrysanthemi</name>
    <name type="synonym">Erwinia chrysanthemi</name>
    <dbReference type="NCBI Taxonomy" id="556"/>
    <lineage>
        <taxon>Bacteria</taxon>
        <taxon>Pseudomonadati</taxon>
        <taxon>Pseudomonadota</taxon>
        <taxon>Gammaproteobacteria</taxon>
        <taxon>Enterobacterales</taxon>
        <taxon>Pectobacteriaceae</taxon>
        <taxon>Dickeya</taxon>
    </lineage>
</organism>
<comment type="function">
    <text>Functions as a potential ohlL-responsive transcriptional regulator.</text>
</comment>
<comment type="similarity">
    <text evidence="2">Belongs to the autoinducer-regulated transcriptional regulatory protein family.</text>
</comment>
<name>ECHR_DICCH</name>
<feature type="chain" id="PRO_0000184149" description="Transcriptional activator protein EchR">
    <location>
        <begin position="1"/>
        <end position="250"/>
    </location>
</feature>
<feature type="domain" description="HTH luxR-type" evidence="1">
    <location>
        <begin position="173"/>
        <end position="238"/>
    </location>
</feature>
<feature type="DNA-binding region" description="H-T-H motif" evidence="1">
    <location>
        <begin position="197"/>
        <end position="216"/>
    </location>
</feature>
<sequence>MSISFSNFDFINSTIQNYLNRKLKSYGDLKYAYLIMNKKKPTDVVIISNYPSEWVEIYRSNNYQHIDPVILTAINKISPFSWDDDLVISSKLKFSRIFNLSKEYDIVNGYTFVLHDPGNNLATLSFMFEENRSGELEEIVQNNKEKLQMLLISAHEKLTSLYREMSKNKNNSKSQEPNIFSQRENEILYWASMGKTYQEIALILGITTSTVKFHIGNVVKKLGVLNAKHAIRLGVEMNLIKPVEPVKARS</sequence>